<reference key="1">
    <citation type="journal article" date="2019" name="J. Am. Chem. Soc.">
        <title>Peniphenone and penilactone formation in Penicillium crustosum via 1,4-Michael additions of ortho-quinone methide from hydroxyclavatol to gamma-butyrolactones from Crustosic Acid.</title>
        <authorList>
            <person name="Fan J."/>
            <person name="Liao G."/>
            <person name="Kindinger F."/>
            <person name="Ludwig-Radtke L."/>
            <person name="Yin W.B."/>
            <person name="Li S.M."/>
        </authorList>
    </citation>
    <scope>NUCLEOTIDE SEQUENCE [GENOMIC DNA]</scope>
    <scope>FUNCTION</scope>
    <scope>DISRUPTION PHENOTYPE</scope>
    <source>
        <strain>PRB-2</strain>
    </source>
</reference>
<proteinExistence type="inferred from homology"/>
<evidence type="ECO:0000255" key="1"/>
<evidence type="ECO:0000255" key="2">
    <source>
        <dbReference type="PROSITE-ProRule" id="PRU00498"/>
    </source>
</evidence>
<evidence type="ECO:0000256" key="3">
    <source>
        <dbReference type="SAM" id="MobiDB-lite"/>
    </source>
</evidence>
<evidence type="ECO:0000269" key="4">
    <source>
    </source>
</evidence>
<evidence type="ECO:0000303" key="5">
    <source>
    </source>
</evidence>
<accession>A0A481WQD3</accession>
<protein>
    <recommendedName>
        <fullName evidence="5">MFS-type transporter traF</fullName>
    </recommendedName>
    <alternativeName>
        <fullName evidence="5">Terrestric acid biosynthesis cluster protein F</fullName>
    </alternativeName>
</protein>
<organism>
    <name type="scientific">Penicillium crustosum</name>
    <name type="common">Blue mold fungus</name>
    <dbReference type="NCBI Taxonomy" id="36656"/>
    <lineage>
        <taxon>Eukaryota</taxon>
        <taxon>Fungi</taxon>
        <taxon>Dikarya</taxon>
        <taxon>Ascomycota</taxon>
        <taxon>Pezizomycotina</taxon>
        <taxon>Eurotiomycetes</taxon>
        <taxon>Eurotiomycetidae</taxon>
        <taxon>Eurotiales</taxon>
        <taxon>Aspergillaceae</taxon>
        <taxon>Penicillium</taxon>
    </lineage>
</organism>
<feature type="chain" id="PRO_0000455058" description="MFS-type transporter traF">
    <location>
        <begin position="1"/>
        <end position="482"/>
    </location>
</feature>
<feature type="transmembrane region" description="Helical" evidence="1">
    <location>
        <begin position="52"/>
        <end position="72"/>
    </location>
</feature>
<feature type="transmembrane region" description="Helical" evidence="1">
    <location>
        <begin position="89"/>
        <end position="109"/>
    </location>
</feature>
<feature type="transmembrane region" description="Helical" evidence="1">
    <location>
        <begin position="125"/>
        <end position="145"/>
    </location>
</feature>
<feature type="transmembrane region" description="Helical" evidence="1">
    <location>
        <begin position="149"/>
        <end position="169"/>
    </location>
</feature>
<feature type="transmembrane region" description="Helical" evidence="1">
    <location>
        <begin position="176"/>
        <end position="196"/>
    </location>
</feature>
<feature type="transmembrane region" description="Helical" evidence="1">
    <location>
        <begin position="209"/>
        <end position="229"/>
    </location>
</feature>
<feature type="transmembrane region" description="Helical" evidence="1">
    <location>
        <begin position="275"/>
        <end position="295"/>
    </location>
</feature>
<feature type="transmembrane region" description="Helical" evidence="1">
    <location>
        <begin position="312"/>
        <end position="332"/>
    </location>
</feature>
<feature type="transmembrane region" description="Helical" evidence="1">
    <location>
        <begin position="354"/>
        <end position="374"/>
    </location>
</feature>
<feature type="transmembrane region" description="Helical" evidence="1">
    <location>
        <begin position="379"/>
        <end position="399"/>
    </location>
</feature>
<feature type="transmembrane region" description="Helical" evidence="1">
    <location>
        <begin position="427"/>
        <end position="447"/>
    </location>
</feature>
<feature type="transmembrane region" description="Helical" evidence="1">
    <location>
        <begin position="448"/>
        <end position="468"/>
    </location>
</feature>
<feature type="region of interest" description="Disordered" evidence="3">
    <location>
        <begin position="1"/>
        <end position="22"/>
    </location>
</feature>
<feature type="compositionally biased region" description="Polar residues" evidence="3">
    <location>
        <begin position="1"/>
        <end position="14"/>
    </location>
</feature>
<feature type="glycosylation site" description="N-linked (GlcNAc...) asparagine" evidence="2">
    <location>
        <position position="15"/>
    </location>
</feature>
<feature type="glycosylation site" description="N-linked (GlcNAc...) asparagine" evidence="2">
    <location>
        <position position="45"/>
    </location>
</feature>
<feature type="glycosylation site" description="N-linked (GlcNAc...) asparagine" evidence="2">
    <location>
        <position position="376"/>
    </location>
</feature>
<dbReference type="EMBL" id="MK360919">
    <property type="protein sequence ID" value="QBK15054.1"/>
    <property type="molecule type" value="Genomic_DNA"/>
</dbReference>
<dbReference type="SMR" id="A0A481WQD3"/>
<dbReference type="GlyCosmos" id="A0A481WQD3">
    <property type="glycosylation" value="3 sites, No reported glycans"/>
</dbReference>
<dbReference type="GO" id="GO:0005886">
    <property type="term" value="C:plasma membrane"/>
    <property type="evidence" value="ECO:0007669"/>
    <property type="project" value="TreeGrafter"/>
</dbReference>
<dbReference type="GO" id="GO:0022857">
    <property type="term" value="F:transmembrane transporter activity"/>
    <property type="evidence" value="ECO:0007669"/>
    <property type="project" value="InterPro"/>
</dbReference>
<dbReference type="CDD" id="cd17323">
    <property type="entry name" value="MFS_Tpo1_MDR_like"/>
    <property type="match status" value="1"/>
</dbReference>
<dbReference type="FunFam" id="1.20.1250.20:FF:000011">
    <property type="entry name" value="MFS multidrug transporter, putative"/>
    <property type="match status" value="1"/>
</dbReference>
<dbReference type="Gene3D" id="1.20.1250.20">
    <property type="entry name" value="MFS general substrate transporter like domains"/>
    <property type="match status" value="1"/>
</dbReference>
<dbReference type="InterPro" id="IPR011701">
    <property type="entry name" value="MFS"/>
</dbReference>
<dbReference type="InterPro" id="IPR020846">
    <property type="entry name" value="MFS_dom"/>
</dbReference>
<dbReference type="InterPro" id="IPR036259">
    <property type="entry name" value="MFS_trans_sf"/>
</dbReference>
<dbReference type="PANTHER" id="PTHR23502">
    <property type="entry name" value="MAJOR FACILITATOR SUPERFAMILY"/>
    <property type="match status" value="1"/>
</dbReference>
<dbReference type="PANTHER" id="PTHR23502:SF47">
    <property type="entry name" value="MAJOR FACILITATOR SUPERFAMILY (MFS) PROFILE DOMAIN-CONTAINING PROTEIN-RELATED"/>
    <property type="match status" value="1"/>
</dbReference>
<dbReference type="Pfam" id="PF07690">
    <property type="entry name" value="MFS_1"/>
    <property type="match status" value="1"/>
</dbReference>
<dbReference type="SUPFAM" id="SSF103473">
    <property type="entry name" value="MFS general substrate transporter"/>
    <property type="match status" value="1"/>
</dbReference>
<dbReference type="PROSITE" id="PS50850">
    <property type="entry name" value="MFS"/>
    <property type="match status" value="1"/>
</dbReference>
<keyword id="KW-0325">Glycoprotein</keyword>
<keyword id="KW-0472">Membrane</keyword>
<keyword id="KW-0812">Transmembrane</keyword>
<keyword id="KW-1133">Transmembrane helix</keyword>
<keyword id="KW-0813">Transport</keyword>
<name>TRAF_PENCR</name>
<gene>
    <name evidence="5" type="primary">traF</name>
</gene>
<sequence length="482" mass="52532">MTSGTEQATLNTEENGSDSDHLSKEPIAMPALDWDGPTDSNNPRNFSTPKKVFITACLASLVCISTFGSSVMSPASGQLIHEFGISKELSILATALYVLGFAVGPLLFGPASEVLGRKYPLSVGVFLFAIFSIPIAVAKNVATIFVCRFLCGTFAAAPLAIAGGGLADLWEPLSRGIAVAGFASATFLGPVLGPLVGGFVTKSHLGWRWTQWLSIIFSLVFLAIYFVFCPETYSPIVLARLAKKRGQMPPGGKVDFKQLAKVYMLRPFIMLVQEPILALLTLYMGFIYGFLYLCFEAFPIAFEEHRGWDIGIGSLPFLSITVGVLIGVVIIIVHTMTRMRRKLETVGDAPEERLVPMMIGSILMPAGIFWFAWTSNTSLPWAPQVVSGVFIGCGILLIFLQGMNYIIDVYKVMANSAISINAMFRGLLGAGFPLFASYMFDNLGVPWAMSLLGFLCVALVPVPFLFFIYGERIRKWSKFTAH</sequence>
<comment type="function">
    <text evidence="4">MFS-type transporter; part of the tra gene cluster that produces terrestric acid (PubMed:30811183). The clavatol biosynthesis cluster cla and the terrestric acid cluster tra are both involved in the production of peniphenones and penilactones (PubMed:30811183).</text>
</comment>
<comment type="subcellular location">
    <subcellularLocation>
        <location evidence="1">Membrane</location>
        <topology evidence="1">Multi-pass membrane protein</topology>
    </subcellularLocation>
</comment>
<comment type="disruption phenotype">
    <text evidence="4">Does not result in significant changes in sencondary metabolites production.</text>
</comment>
<comment type="similarity">
    <text evidence="1">Belongs to the major facilitator superfamily. CAR1 family.</text>
</comment>